<comment type="function">
    <text evidence="1">Probably functions as a manganese efflux pump.</text>
</comment>
<comment type="subcellular location">
    <subcellularLocation>
        <location evidence="1">Cell membrane</location>
        <topology evidence="1">Multi-pass membrane protein</topology>
    </subcellularLocation>
</comment>
<comment type="similarity">
    <text evidence="1">Belongs to the MntP (TC 9.B.29) family.</text>
</comment>
<gene>
    <name evidence="1" type="primary">mntP2</name>
    <name type="ordered locus">CLI_1375</name>
</gene>
<organism>
    <name type="scientific">Clostridium botulinum (strain Langeland / NCTC 10281 / Type F)</name>
    <dbReference type="NCBI Taxonomy" id="441772"/>
    <lineage>
        <taxon>Bacteria</taxon>
        <taxon>Bacillati</taxon>
        <taxon>Bacillota</taxon>
        <taxon>Clostridia</taxon>
        <taxon>Eubacteriales</taxon>
        <taxon>Clostridiaceae</taxon>
        <taxon>Clostridium</taxon>
    </lineage>
</organism>
<name>MNTP2_CLOBL</name>
<dbReference type="EMBL" id="CP000728">
    <property type="protein sequence ID" value="ABS41867.1"/>
    <property type="molecule type" value="Genomic_DNA"/>
</dbReference>
<dbReference type="RefSeq" id="WP_011988144.1">
    <property type="nucleotide sequence ID" value="NC_009699.1"/>
</dbReference>
<dbReference type="KEGG" id="cbf:CLI_1375"/>
<dbReference type="HOGENOM" id="CLU_096410_3_0_9"/>
<dbReference type="Proteomes" id="UP000002410">
    <property type="component" value="Chromosome"/>
</dbReference>
<dbReference type="GO" id="GO:0005886">
    <property type="term" value="C:plasma membrane"/>
    <property type="evidence" value="ECO:0007669"/>
    <property type="project" value="UniProtKB-SubCell"/>
</dbReference>
<dbReference type="GO" id="GO:0005384">
    <property type="term" value="F:manganese ion transmembrane transporter activity"/>
    <property type="evidence" value="ECO:0007669"/>
    <property type="project" value="UniProtKB-UniRule"/>
</dbReference>
<dbReference type="HAMAP" id="MF_01521">
    <property type="entry name" value="MntP_pump"/>
    <property type="match status" value="1"/>
</dbReference>
<dbReference type="InterPro" id="IPR036259">
    <property type="entry name" value="MFS_trans_sf"/>
</dbReference>
<dbReference type="InterPro" id="IPR003810">
    <property type="entry name" value="Mntp/YtaF"/>
</dbReference>
<dbReference type="InterPro" id="IPR022929">
    <property type="entry name" value="Put_MntP"/>
</dbReference>
<dbReference type="PANTHER" id="PTHR35529">
    <property type="entry name" value="MANGANESE EFFLUX PUMP MNTP-RELATED"/>
    <property type="match status" value="1"/>
</dbReference>
<dbReference type="PANTHER" id="PTHR35529:SF1">
    <property type="entry name" value="MANGANESE EFFLUX PUMP MNTP-RELATED"/>
    <property type="match status" value="1"/>
</dbReference>
<dbReference type="Pfam" id="PF02659">
    <property type="entry name" value="Mntp"/>
    <property type="match status" value="1"/>
</dbReference>
<dbReference type="SUPFAM" id="SSF103473">
    <property type="entry name" value="MFS general substrate transporter"/>
    <property type="match status" value="1"/>
</dbReference>
<feature type="chain" id="PRO_0000315565" description="Putative manganese efflux pump MntP 2">
    <location>
        <begin position="1"/>
        <end position="201"/>
    </location>
</feature>
<feature type="transmembrane region" description="Helical" evidence="1">
    <location>
        <begin position="3"/>
        <end position="23"/>
    </location>
</feature>
<feature type="transmembrane region" description="Helical" evidence="1">
    <location>
        <begin position="39"/>
        <end position="59"/>
    </location>
</feature>
<feature type="transmembrane region" description="Helical" evidence="1">
    <location>
        <begin position="65"/>
        <end position="85"/>
    </location>
</feature>
<feature type="transmembrane region" description="Helical" evidence="1">
    <location>
        <begin position="116"/>
        <end position="136"/>
    </location>
</feature>
<feature type="transmembrane region" description="Helical" evidence="1">
    <location>
        <begin position="141"/>
        <end position="161"/>
    </location>
</feature>
<feature type="transmembrane region" description="Helical" evidence="1">
    <location>
        <begin position="176"/>
        <end position="196"/>
    </location>
</feature>
<reference key="1">
    <citation type="submission" date="2007-06" db="EMBL/GenBank/DDBJ databases">
        <authorList>
            <person name="Brinkac L.M."/>
            <person name="Daugherty S."/>
            <person name="Dodson R.J."/>
            <person name="Madupu R."/>
            <person name="Brown J.L."/>
            <person name="Bruce D."/>
            <person name="Detter C."/>
            <person name="Munk C."/>
            <person name="Smith L.A."/>
            <person name="Smith T.J."/>
            <person name="White O."/>
            <person name="Brettin T.S."/>
        </authorList>
    </citation>
    <scope>NUCLEOTIDE SEQUENCE [LARGE SCALE GENOMIC DNA]</scope>
    <source>
        <strain>Langeland / NCTC 10281 / Type F</strain>
    </source>
</reference>
<accession>A7GCY0</accession>
<keyword id="KW-1003">Cell membrane</keyword>
<keyword id="KW-0406">Ion transport</keyword>
<keyword id="KW-0464">Manganese</keyword>
<keyword id="KW-0472">Membrane</keyword>
<keyword id="KW-0812">Transmembrane</keyword>
<keyword id="KW-1133">Transmembrane helix</keyword>
<keyword id="KW-0813">Transport</keyword>
<sequence length="201" mass="21669">MDLISVILISIGLSMDAFAVSITNGAMISKVTASEGIRIGLFFGGFQALMPLIGWSIGIKFESYIAALDHWIALILLSIIGGKMIYDSVKENQDHKDEIACDYAVGEKKCLNNKTLILLAIATSIDALAVGVSFAFLKVSIINTIVIIGSITFVICFIGVMIGKKCGKLLKKRAEILGGVVLILIGVKIFIQHTNILSYIF</sequence>
<protein>
    <recommendedName>
        <fullName evidence="1">Putative manganese efflux pump MntP 2</fullName>
    </recommendedName>
</protein>
<evidence type="ECO:0000255" key="1">
    <source>
        <dbReference type="HAMAP-Rule" id="MF_01521"/>
    </source>
</evidence>
<proteinExistence type="inferred from homology"/>